<proteinExistence type="inferred from homology"/>
<gene>
    <name evidence="1" type="primary">hscA</name>
    <name type="ordered locus">SBO_2550</name>
</gene>
<accession>Q31XW4</accession>
<comment type="function">
    <text evidence="1">Chaperone involved in the maturation of iron-sulfur cluster-containing proteins. Has a low intrinsic ATPase activity which is markedly stimulated by HscB. Involved in the maturation of IscU.</text>
</comment>
<comment type="similarity">
    <text evidence="1">Belongs to the heat shock protein 70 family.</text>
</comment>
<keyword id="KW-0067">ATP-binding</keyword>
<keyword id="KW-0143">Chaperone</keyword>
<keyword id="KW-0547">Nucleotide-binding</keyword>
<name>HSCA_SHIBS</name>
<organism>
    <name type="scientific">Shigella boydii serotype 4 (strain Sb227)</name>
    <dbReference type="NCBI Taxonomy" id="300268"/>
    <lineage>
        <taxon>Bacteria</taxon>
        <taxon>Pseudomonadati</taxon>
        <taxon>Pseudomonadota</taxon>
        <taxon>Gammaproteobacteria</taxon>
        <taxon>Enterobacterales</taxon>
        <taxon>Enterobacteriaceae</taxon>
        <taxon>Shigella</taxon>
    </lineage>
</organism>
<sequence>MALLQISEPGLSAAPHQRRLAAGIDLGTTNSLVATVRSGQAETLADHEGRHLLPSVVHYQQQGHSVGYDARTNAALDTANTISSVKRLMGRSLADIQQRYPHLPYQFQASENGLPMIETAAGLLNPVRVSADILKALAARATEALAGELDGVVITVPAYFDDAQRQGTKDAARLAGLHVLRLLNEPTAAAIAYGLDSGQEGVIAVYDLGGGTFDISILRLSRGVFEVLATGGDSALGGDDFDHLLADYIREQADIPDRSDNRVQRELLDAAIAAKIALSDADSVTVNVAGWQGEISREQFNELIAPLVKRTLLACRRALKDAGVEADEVLEVVMVGGSTRVPLVRERVGEFFGRPPLTSIDPDKVVAIGAAIQADILVGNKPDSEMLLLDVIPLSLGLETMGGLVEKVIPRNTTIPVARAQDFTTFKDGQTAMSIHVMQGERELVQDCRSLARFALRGIPALPAGGAHIRVTFQVDADGLLSVTAMEKSTGVEASIQVKPSYGLTDSEIASMIKDSMSYAEQDVKARMLAEQKVEAARVLESLHGALAADAALLSAAERQVIDNAAAHLSEVAQGDDVDAIEQAIKNVDKQTQDFAARRMDQSVRRALKGHSVDEV</sequence>
<dbReference type="EMBL" id="CP000036">
    <property type="protein sequence ID" value="ABB67094.1"/>
    <property type="molecule type" value="Genomic_DNA"/>
</dbReference>
<dbReference type="RefSeq" id="WP_001196599.1">
    <property type="nucleotide sequence ID" value="NC_007613.1"/>
</dbReference>
<dbReference type="SMR" id="Q31XW4"/>
<dbReference type="KEGG" id="sbo:SBO_2550"/>
<dbReference type="HOGENOM" id="CLU_005965_2_1_6"/>
<dbReference type="Proteomes" id="UP000007067">
    <property type="component" value="Chromosome"/>
</dbReference>
<dbReference type="GO" id="GO:0005524">
    <property type="term" value="F:ATP binding"/>
    <property type="evidence" value="ECO:0007669"/>
    <property type="project" value="UniProtKB-KW"/>
</dbReference>
<dbReference type="GO" id="GO:0016887">
    <property type="term" value="F:ATP hydrolysis activity"/>
    <property type="evidence" value="ECO:0007669"/>
    <property type="project" value="UniProtKB-UniRule"/>
</dbReference>
<dbReference type="GO" id="GO:0140662">
    <property type="term" value="F:ATP-dependent protein folding chaperone"/>
    <property type="evidence" value="ECO:0007669"/>
    <property type="project" value="InterPro"/>
</dbReference>
<dbReference type="GO" id="GO:0051082">
    <property type="term" value="F:unfolded protein binding"/>
    <property type="evidence" value="ECO:0007669"/>
    <property type="project" value="InterPro"/>
</dbReference>
<dbReference type="GO" id="GO:0016226">
    <property type="term" value="P:iron-sulfur cluster assembly"/>
    <property type="evidence" value="ECO:0007669"/>
    <property type="project" value="InterPro"/>
</dbReference>
<dbReference type="CDD" id="cd10236">
    <property type="entry name" value="ASKHA_NBD_HSP70_HscA"/>
    <property type="match status" value="1"/>
</dbReference>
<dbReference type="FunFam" id="1.20.1270.10:FF:000006">
    <property type="entry name" value="Chaperone protein HscA"/>
    <property type="match status" value="1"/>
</dbReference>
<dbReference type="FunFam" id="3.30.420.40:FF:000046">
    <property type="entry name" value="Chaperone protein HscA"/>
    <property type="match status" value="1"/>
</dbReference>
<dbReference type="FunFam" id="3.90.640.10:FF:000013">
    <property type="entry name" value="Chaperone protein HscA"/>
    <property type="match status" value="1"/>
</dbReference>
<dbReference type="FunFam" id="2.60.34.10:FF:000005">
    <property type="entry name" value="Chaperone protein HscA homolog"/>
    <property type="match status" value="1"/>
</dbReference>
<dbReference type="FunFam" id="3.30.420.40:FF:000020">
    <property type="entry name" value="Chaperone protein HscA homolog"/>
    <property type="match status" value="1"/>
</dbReference>
<dbReference type="Gene3D" id="1.20.1270.10">
    <property type="match status" value="1"/>
</dbReference>
<dbReference type="Gene3D" id="3.30.420.40">
    <property type="match status" value="2"/>
</dbReference>
<dbReference type="Gene3D" id="3.90.640.10">
    <property type="entry name" value="Actin, Chain A, domain 4"/>
    <property type="match status" value="1"/>
</dbReference>
<dbReference type="Gene3D" id="2.60.34.10">
    <property type="entry name" value="Substrate Binding Domain Of DNAk, Chain A, domain 1"/>
    <property type="match status" value="1"/>
</dbReference>
<dbReference type="HAMAP" id="MF_00679">
    <property type="entry name" value="HscA"/>
    <property type="match status" value="1"/>
</dbReference>
<dbReference type="InterPro" id="IPR043129">
    <property type="entry name" value="ATPase_NBD"/>
</dbReference>
<dbReference type="InterPro" id="IPR018181">
    <property type="entry name" value="Heat_shock_70_CS"/>
</dbReference>
<dbReference type="InterPro" id="IPR042039">
    <property type="entry name" value="HscA_NBD"/>
</dbReference>
<dbReference type="InterPro" id="IPR029048">
    <property type="entry name" value="HSP70_C_sf"/>
</dbReference>
<dbReference type="InterPro" id="IPR029047">
    <property type="entry name" value="HSP70_peptide-bd_sf"/>
</dbReference>
<dbReference type="InterPro" id="IPR013126">
    <property type="entry name" value="Hsp_70_fam"/>
</dbReference>
<dbReference type="InterPro" id="IPR010236">
    <property type="entry name" value="ISC_FeS_clus_asmbl_HscA"/>
</dbReference>
<dbReference type="NCBIfam" id="TIGR01991">
    <property type="entry name" value="HscA"/>
    <property type="match status" value="1"/>
</dbReference>
<dbReference type="NCBIfam" id="NF003520">
    <property type="entry name" value="PRK05183.1"/>
    <property type="match status" value="1"/>
</dbReference>
<dbReference type="PANTHER" id="PTHR19375">
    <property type="entry name" value="HEAT SHOCK PROTEIN 70KDA"/>
    <property type="match status" value="1"/>
</dbReference>
<dbReference type="Pfam" id="PF00012">
    <property type="entry name" value="HSP70"/>
    <property type="match status" value="1"/>
</dbReference>
<dbReference type="PRINTS" id="PR00301">
    <property type="entry name" value="HEATSHOCK70"/>
</dbReference>
<dbReference type="SUPFAM" id="SSF53067">
    <property type="entry name" value="Actin-like ATPase domain"/>
    <property type="match status" value="2"/>
</dbReference>
<dbReference type="SUPFAM" id="SSF100934">
    <property type="entry name" value="Heat shock protein 70kD (HSP70), C-terminal subdomain"/>
    <property type="match status" value="1"/>
</dbReference>
<dbReference type="SUPFAM" id="SSF100920">
    <property type="entry name" value="Heat shock protein 70kD (HSP70), peptide-binding domain"/>
    <property type="match status" value="1"/>
</dbReference>
<dbReference type="PROSITE" id="PS00297">
    <property type="entry name" value="HSP70_1"/>
    <property type="match status" value="1"/>
</dbReference>
<dbReference type="PROSITE" id="PS00329">
    <property type="entry name" value="HSP70_2"/>
    <property type="match status" value="1"/>
</dbReference>
<dbReference type="PROSITE" id="PS01036">
    <property type="entry name" value="HSP70_3"/>
    <property type="match status" value="1"/>
</dbReference>
<reference key="1">
    <citation type="journal article" date="2005" name="Nucleic Acids Res.">
        <title>Genome dynamics and diversity of Shigella species, the etiologic agents of bacillary dysentery.</title>
        <authorList>
            <person name="Yang F."/>
            <person name="Yang J."/>
            <person name="Zhang X."/>
            <person name="Chen L."/>
            <person name="Jiang Y."/>
            <person name="Yan Y."/>
            <person name="Tang X."/>
            <person name="Wang J."/>
            <person name="Xiong Z."/>
            <person name="Dong J."/>
            <person name="Xue Y."/>
            <person name="Zhu Y."/>
            <person name="Xu X."/>
            <person name="Sun L."/>
            <person name="Chen S."/>
            <person name="Nie H."/>
            <person name="Peng J."/>
            <person name="Xu J."/>
            <person name="Wang Y."/>
            <person name="Yuan Z."/>
            <person name="Wen Y."/>
            <person name="Yao Z."/>
            <person name="Shen Y."/>
            <person name="Qiang B."/>
            <person name="Hou Y."/>
            <person name="Yu J."/>
            <person name="Jin Q."/>
        </authorList>
    </citation>
    <scope>NUCLEOTIDE SEQUENCE [LARGE SCALE GENOMIC DNA]</scope>
    <source>
        <strain>Sb227</strain>
    </source>
</reference>
<protein>
    <recommendedName>
        <fullName evidence="1">Chaperone protein HscA</fullName>
    </recommendedName>
    <alternativeName>
        <fullName evidence="1">Hsc66</fullName>
    </alternativeName>
</protein>
<evidence type="ECO:0000255" key="1">
    <source>
        <dbReference type="HAMAP-Rule" id="MF_00679"/>
    </source>
</evidence>
<feature type="chain" id="PRO_1000044895" description="Chaperone protein HscA">
    <location>
        <begin position="1"/>
        <end position="616"/>
    </location>
</feature>